<comment type="function">
    <text evidence="2">One of the essential components for the initiation of protein synthesis. Protects formylmethionyl-tRNA from spontaneous hydrolysis and promotes its binding to the 30S ribosomal subunits. Also involved in the hydrolysis of GTP during the formation of the 70S ribosomal complex.</text>
</comment>
<comment type="subcellular location">
    <subcellularLocation>
        <location evidence="2">Cytoplasm</location>
    </subcellularLocation>
</comment>
<comment type="similarity">
    <text evidence="2">Belongs to the TRAFAC class translation factor GTPase superfamily. Classic translation factor GTPase family. IF-2 subfamily.</text>
</comment>
<accession>B4TWD8</accession>
<keyword id="KW-0963">Cytoplasm</keyword>
<keyword id="KW-0342">GTP-binding</keyword>
<keyword id="KW-0396">Initiation factor</keyword>
<keyword id="KW-0547">Nucleotide-binding</keyword>
<keyword id="KW-0648">Protein biosynthesis</keyword>
<protein>
    <recommendedName>
        <fullName evidence="2">Translation initiation factor IF-2</fullName>
    </recommendedName>
</protein>
<organism>
    <name type="scientific">Salmonella schwarzengrund (strain CVM19633)</name>
    <dbReference type="NCBI Taxonomy" id="439843"/>
    <lineage>
        <taxon>Bacteria</taxon>
        <taxon>Pseudomonadati</taxon>
        <taxon>Pseudomonadota</taxon>
        <taxon>Gammaproteobacteria</taxon>
        <taxon>Enterobacterales</taxon>
        <taxon>Enterobacteriaceae</taxon>
        <taxon>Salmonella</taxon>
    </lineage>
</organism>
<proteinExistence type="inferred from homology"/>
<dbReference type="EMBL" id="CP001127">
    <property type="protein sequence ID" value="ACF91443.1"/>
    <property type="molecule type" value="Genomic_DNA"/>
</dbReference>
<dbReference type="RefSeq" id="WP_000133062.1">
    <property type="nucleotide sequence ID" value="NC_011094.1"/>
</dbReference>
<dbReference type="SMR" id="B4TWD8"/>
<dbReference type="KEGG" id="sew:SeSA_A3476"/>
<dbReference type="HOGENOM" id="CLU_006301_6_3_6"/>
<dbReference type="Proteomes" id="UP000001865">
    <property type="component" value="Chromosome"/>
</dbReference>
<dbReference type="GO" id="GO:0005829">
    <property type="term" value="C:cytosol"/>
    <property type="evidence" value="ECO:0007669"/>
    <property type="project" value="TreeGrafter"/>
</dbReference>
<dbReference type="GO" id="GO:0005525">
    <property type="term" value="F:GTP binding"/>
    <property type="evidence" value="ECO:0007669"/>
    <property type="project" value="UniProtKB-KW"/>
</dbReference>
<dbReference type="GO" id="GO:0003924">
    <property type="term" value="F:GTPase activity"/>
    <property type="evidence" value="ECO:0007669"/>
    <property type="project" value="UniProtKB-UniRule"/>
</dbReference>
<dbReference type="GO" id="GO:0097216">
    <property type="term" value="F:guanosine tetraphosphate binding"/>
    <property type="evidence" value="ECO:0007669"/>
    <property type="project" value="UniProtKB-ARBA"/>
</dbReference>
<dbReference type="GO" id="GO:0003743">
    <property type="term" value="F:translation initiation factor activity"/>
    <property type="evidence" value="ECO:0007669"/>
    <property type="project" value="UniProtKB-UniRule"/>
</dbReference>
<dbReference type="CDD" id="cd01887">
    <property type="entry name" value="IF2_eIF5B"/>
    <property type="match status" value="1"/>
</dbReference>
<dbReference type="CDD" id="cd03702">
    <property type="entry name" value="IF2_mtIF2_II"/>
    <property type="match status" value="1"/>
</dbReference>
<dbReference type="CDD" id="cd03692">
    <property type="entry name" value="mtIF2_IVc"/>
    <property type="match status" value="1"/>
</dbReference>
<dbReference type="FunFam" id="2.40.30.10:FF:000007">
    <property type="entry name" value="Translation initiation factor IF-2"/>
    <property type="match status" value="1"/>
</dbReference>
<dbReference type="FunFam" id="2.40.30.10:FF:000008">
    <property type="entry name" value="Translation initiation factor IF-2"/>
    <property type="match status" value="1"/>
</dbReference>
<dbReference type="FunFam" id="3.30.56.50:FF:000001">
    <property type="entry name" value="Translation initiation factor IF-2"/>
    <property type="match status" value="1"/>
</dbReference>
<dbReference type="FunFam" id="3.40.50.10050:FF:000001">
    <property type="entry name" value="Translation initiation factor IF-2"/>
    <property type="match status" value="1"/>
</dbReference>
<dbReference type="FunFam" id="3.40.50.300:FF:000019">
    <property type="entry name" value="Translation initiation factor IF-2"/>
    <property type="match status" value="1"/>
</dbReference>
<dbReference type="Gene3D" id="3.40.50.300">
    <property type="entry name" value="P-loop containing nucleotide triphosphate hydrolases"/>
    <property type="match status" value="1"/>
</dbReference>
<dbReference type="Gene3D" id="3.30.56.50">
    <property type="entry name" value="Putative DNA-binding domain, N-terminal subdomain of bacterial translation initiation factor IF2"/>
    <property type="match status" value="1"/>
</dbReference>
<dbReference type="Gene3D" id="2.40.30.10">
    <property type="entry name" value="Translation factors"/>
    <property type="match status" value="2"/>
</dbReference>
<dbReference type="Gene3D" id="3.40.50.10050">
    <property type="entry name" value="Translation initiation factor IF- 2, domain 3"/>
    <property type="match status" value="1"/>
</dbReference>
<dbReference type="HAMAP" id="MF_00100_B">
    <property type="entry name" value="IF_2_B"/>
    <property type="match status" value="1"/>
</dbReference>
<dbReference type="InterPro" id="IPR009061">
    <property type="entry name" value="DNA-bd_dom_put_sf"/>
</dbReference>
<dbReference type="InterPro" id="IPR053905">
    <property type="entry name" value="EF-G-like_DII"/>
</dbReference>
<dbReference type="InterPro" id="IPR004161">
    <property type="entry name" value="EFTu-like_2"/>
</dbReference>
<dbReference type="InterPro" id="IPR013575">
    <property type="entry name" value="IF2_assoc_dom_bac"/>
</dbReference>
<dbReference type="InterPro" id="IPR044145">
    <property type="entry name" value="IF2_II"/>
</dbReference>
<dbReference type="InterPro" id="IPR006847">
    <property type="entry name" value="IF2_N"/>
</dbReference>
<dbReference type="InterPro" id="IPR027417">
    <property type="entry name" value="P-loop_NTPase"/>
</dbReference>
<dbReference type="InterPro" id="IPR005225">
    <property type="entry name" value="Small_GTP-bd"/>
</dbReference>
<dbReference type="InterPro" id="IPR000795">
    <property type="entry name" value="T_Tr_GTP-bd_dom"/>
</dbReference>
<dbReference type="InterPro" id="IPR000178">
    <property type="entry name" value="TF_IF2_bacterial-like"/>
</dbReference>
<dbReference type="InterPro" id="IPR015760">
    <property type="entry name" value="TIF_IF2"/>
</dbReference>
<dbReference type="InterPro" id="IPR023115">
    <property type="entry name" value="TIF_IF2_dom3"/>
</dbReference>
<dbReference type="InterPro" id="IPR036925">
    <property type="entry name" value="TIF_IF2_dom3_sf"/>
</dbReference>
<dbReference type="InterPro" id="IPR009000">
    <property type="entry name" value="Transl_B-barrel_sf"/>
</dbReference>
<dbReference type="NCBIfam" id="TIGR00487">
    <property type="entry name" value="IF-2"/>
    <property type="match status" value="1"/>
</dbReference>
<dbReference type="NCBIfam" id="TIGR00231">
    <property type="entry name" value="small_GTP"/>
    <property type="match status" value="1"/>
</dbReference>
<dbReference type="PANTHER" id="PTHR43381:SF5">
    <property type="entry name" value="TR-TYPE G DOMAIN-CONTAINING PROTEIN"/>
    <property type="match status" value="1"/>
</dbReference>
<dbReference type="PANTHER" id="PTHR43381">
    <property type="entry name" value="TRANSLATION INITIATION FACTOR IF-2-RELATED"/>
    <property type="match status" value="1"/>
</dbReference>
<dbReference type="Pfam" id="PF22042">
    <property type="entry name" value="EF-G_D2"/>
    <property type="match status" value="1"/>
</dbReference>
<dbReference type="Pfam" id="PF00009">
    <property type="entry name" value="GTP_EFTU"/>
    <property type="match status" value="1"/>
</dbReference>
<dbReference type="Pfam" id="PF03144">
    <property type="entry name" value="GTP_EFTU_D2"/>
    <property type="match status" value="1"/>
</dbReference>
<dbReference type="Pfam" id="PF11987">
    <property type="entry name" value="IF-2"/>
    <property type="match status" value="1"/>
</dbReference>
<dbReference type="Pfam" id="PF08364">
    <property type="entry name" value="IF2_assoc"/>
    <property type="match status" value="1"/>
</dbReference>
<dbReference type="Pfam" id="PF04760">
    <property type="entry name" value="IF2_N"/>
    <property type="match status" value="2"/>
</dbReference>
<dbReference type="SUPFAM" id="SSF52156">
    <property type="entry name" value="Initiation factor IF2/eIF5b, domain 3"/>
    <property type="match status" value="1"/>
</dbReference>
<dbReference type="SUPFAM" id="SSF52540">
    <property type="entry name" value="P-loop containing nucleoside triphosphate hydrolases"/>
    <property type="match status" value="1"/>
</dbReference>
<dbReference type="SUPFAM" id="SSF46955">
    <property type="entry name" value="Putative DNA-binding domain"/>
    <property type="match status" value="1"/>
</dbReference>
<dbReference type="SUPFAM" id="SSF50447">
    <property type="entry name" value="Translation proteins"/>
    <property type="match status" value="2"/>
</dbReference>
<dbReference type="PROSITE" id="PS51722">
    <property type="entry name" value="G_TR_2"/>
    <property type="match status" value="1"/>
</dbReference>
<dbReference type="PROSITE" id="PS01176">
    <property type="entry name" value="IF2"/>
    <property type="match status" value="1"/>
</dbReference>
<evidence type="ECO:0000250" key="1"/>
<evidence type="ECO:0000255" key="2">
    <source>
        <dbReference type="HAMAP-Rule" id="MF_00100"/>
    </source>
</evidence>
<evidence type="ECO:0000256" key="3">
    <source>
        <dbReference type="SAM" id="MobiDB-lite"/>
    </source>
</evidence>
<feature type="chain" id="PRO_1000093824" description="Translation initiation factor IF-2">
    <location>
        <begin position="1"/>
        <end position="892"/>
    </location>
</feature>
<feature type="domain" description="tr-type G">
    <location>
        <begin position="391"/>
        <end position="560"/>
    </location>
</feature>
<feature type="region of interest" description="Disordered" evidence="3">
    <location>
        <begin position="88"/>
        <end position="306"/>
    </location>
</feature>
<feature type="region of interest" description="G1" evidence="1">
    <location>
        <begin position="400"/>
        <end position="407"/>
    </location>
</feature>
<feature type="region of interest" description="G2" evidence="1">
    <location>
        <begin position="425"/>
        <end position="429"/>
    </location>
</feature>
<feature type="region of interest" description="G3" evidence="1">
    <location>
        <begin position="446"/>
        <end position="449"/>
    </location>
</feature>
<feature type="region of interest" description="G4" evidence="1">
    <location>
        <begin position="500"/>
        <end position="503"/>
    </location>
</feature>
<feature type="region of interest" description="G5" evidence="1">
    <location>
        <begin position="536"/>
        <end position="538"/>
    </location>
</feature>
<feature type="compositionally biased region" description="Basic and acidic residues" evidence="3">
    <location>
        <begin position="93"/>
        <end position="159"/>
    </location>
</feature>
<feature type="compositionally biased region" description="Basic and acidic residues" evidence="3">
    <location>
        <begin position="166"/>
        <end position="216"/>
    </location>
</feature>
<feature type="compositionally biased region" description="Basic residues" evidence="3">
    <location>
        <begin position="254"/>
        <end position="269"/>
    </location>
</feature>
<feature type="compositionally biased region" description="Basic and acidic residues" evidence="3">
    <location>
        <begin position="270"/>
        <end position="282"/>
    </location>
</feature>
<feature type="binding site" evidence="2">
    <location>
        <begin position="400"/>
        <end position="407"/>
    </location>
    <ligand>
        <name>GTP</name>
        <dbReference type="ChEBI" id="CHEBI:37565"/>
    </ligand>
</feature>
<feature type="binding site" evidence="2">
    <location>
        <begin position="446"/>
        <end position="450"/>
    </location>
    <ligand>
        <name>GTP</name>
        <dbReference type="ChEBI" id="CHEBI:37565"/>
    </ligand>
</feature>
<feature type="binding site" evidence="2">
    <location>
        <begin position="500"/>
        <end position="503"/>
    </location>
    <ligand>
        <name>GTP</name>
        <dbReference type="ChEBI" id="CHEBI:37565"/>
    </ligand>
</feature>
<name>IF2_SALSV</name>
<reference key="1">
    <citation type="journal article" date="2011" name="J. Bacteriol.">
        <title>Comparative genomics of 28 Salmonella enterica isolates: evidence for CRISPR-mediated adaptive sublineage evolution.</title>
        <authorList>
            <person name="Fricke W.F."/>
            <person name="Mammel M.K."/>
            <person name="McDermott P.F."/>
            <person name="Tartera C."/>
            <person name="White D.G."/>
            <person name="Leclerc J.E."/>
            <person name="Ravel J."/>
            <person name="Cebula T.A."/>
        </authorList>
    </citation>
    <scope>NUCLEOTIDE SEQUENCE [LARGE SCALE GENOMIC DNA]</scope>
    <source>
        <strain>CVM19633</strain>
    </source>
</reference>
<gene>
    <name evidence="2" type="primary">infB</name>
    <name type="ordered locus">SeSA_A3476</name>
</gene>
<sequence>MTDVTLKALAAERQVSVDRLVQQFADAGIRKSADDSVSAQEKQTLLAHLNREAVSGPDKLTLQRKTRSTLNIPGTGGKSKSVQIEVRKKRTFVKRDPQEAERLAAEEQAQREAEEQARREAEEQAKREAQQKAEREAAEQAKREAAEKAKREAAEKDKVSNQQTDDMIKTAQAEKARRENEAAELKRKAEEEARRKLEEEARRVAEEARRMAEENKWTATPEPVEDTSDYHVTTSQHARQAEDENDREVEGGRGRGRNAKAARPAKKGKHAESKADREEARAAVRGGKGGKRKGSSLQQGFQKPAQAVNRDVVIGETITVGELANKMAVKGSQVIKAMMKLGAMATINQVIDQETAQLVAEEMGHKVILRRENELEEAVMSDRDTGAAAEPRAPVVTIMGHVDHGKTSLLDYIRSTKVASGEAGGITQHIGAYHVETDNGMITFLDTPGHAAFTSMRARGAQATDIVVLVVAADDGVMPQTIEAIQHAKAAGVPVVVAVNKIDKPEADPDRVKNELSQYGILPEEWGGESQFVHVSAKAGTGIDELLDAILLQAEVLELKAVRKGMASGAVIESFLDKGRGPVATVLVREGTLHKGDIVLCGFEYGRVRAMRNELGQEVLEAGPSIPVEILGLSGVPAAGDEVTVVRDEKKAREVALYRQGKFREVKLARQQKSKLENMFANMTEGEVHEVNIVLKADVQGSVEAISDSLLKLSTDEVKVKIIGSGVGGITETDATLAAASNAILVGFNVRADASARKVIESESLDLRYYSVIYNLIDEVKAAMSGMLSPELKQQIIGLAEVRDVFKSPKFGAIAGCMVTEGTIKRHNPIRVLRDNVVIYEGELESLRRFKDDVNEVRNGMECGIGVKNYNDVRVGDMIEVFEIIEIQRTIA</sequence>